<proteinExistence type="inferred from homology"/>
<accession>A1VAL2</accession>
<keyword id="KW-0997">Cell inner membrane</keyword>
<keyword id="KW-1003">Cell membrane</keyword>
<keyword id="KW-0406">Ion transport</keyword>
<keyword id="KW-0464">Manganese</keyword>
<keyword id="KW-0472">Membrane</keyword>
<keyword id="KW-0812">Transmembrane</keyword>
<keyword id="KW-1133">Transmembrane helix</keyword>
<keyword id="KW-0813">Transport</keyword>
<sequence>MNTLECLAVAVALAMDAFAVAIATGIRLREVSPRQTFRLAFHFGLFQALMPVAGWTLGLTVRGYIEQWDHWLAFGLLLYIGVRMMREAFEETEENDDRCDPTRGLTLIMLAVATSIDALAVGLSLSVLGIDIVTPAIVIGVVCLLFTATGLHLGRMLSRAESLGRRAALAGGVVLIGIGLRILYEHGVFDTAATLARSVLG</sequence>
<dbReference type="EMBL" id="CP000527">
    <property type="protein sequence ID" value="ABM27478.1"/>
    <property type="molecule type" value="Genomic_DNA"/>
</dbReference>
<dbReference type="RefSeq" id="WP_010940170.1">
    <property type="nucleotide sequence ID" value="NC_008751.1"/>
</dbReference>
<dbReference type="KEGG" id="dvl:Dvul_0455"/>
<dbReference type="HOGENOM" id="CLU_096410_3_0_7"/>
<dbReference type="Proteomes" id="UP000009173">
    <property type="component" value="Chromosome"/>
</dbReference>
<dbReference type="GO" id="GO:0005886">
    <property type="term" value="C:plasma membrane"/>
    <property type="evidence" value="ECO:0007669"/>
    <property type="project" value="UniProtKB-SubCell"/>
</dbReference>
<dbReference type="GO" id="GO:0005384">
    <property type="term" value="F:manganese ion transmembrane transporter activity"/>
    <property type="evidence" value="ECO:0007669"/>
    <property type="project" value="UniProtKB-UniRule"/>
</dbReference>
<dbReference type="HAMAP" id="MF_01521">
    <property type="entry name" value="MntP_pump"/>
    <property type="match status" value="1"/>
</dbReference>
<dbReference type="InterPro" id="IPR003810">
    <property type="entry name" value="Mntp/YtaF"/>
</dbReference>
<dbReference type="InterPro" id="IPR022929">
    <property type="entry name" value="Put_MntP"/>
</dbReference>
<dbReference type="PANTHER" id="PTHR35529">
    <property type="entry name" value="MANGANESE EFFLUX PUMP MNTP-RELATED"/>
    <property type="match status" value="1"/>
</dbReference>
<dbReference type="PANTHER" id="PTHR35529:SF1">
    <property type="entry name" value="MANGANESE EFFLUX PUMP MNTP-RELATED"/>
    <property type="match status" value="1"/>
</dbReference>
<dbReference type="Pfam" id="PF02659">
    <property type="entry name" value="Mntp"/>
    <property type="match status" value="1"/>
</dbReference>
<name>MNTP_NITV4</name>
<reference key="1">
    <citation type="journal article" date="2009" name="Environ. Microbiol.">
        <title>Contribution of mobile genetic elements to Desulfovibrio vulgaris genome plasticity.</title>
        <authorList>
            <person name="Walker C.B."/>
            <person name="Stolyar S."/>
            <person name="Chivian D."/>
            <person name="Pinel N."/>
            <person name="Gabster J.A."/>
            <person name="Dehal P.S."/>
            <person name="He Z."/>
            <person name="Yang Z.K."/>
            <person name="Yen H.C."/>
            <person name="Zhou J."/>
            <person name="Wall J.D."/>
            <person name="Hazen T.C."/>
            <person name="Arkin A.P."/>
            <person name="Stahl D.A."/>
        </authorList>
    </citation>
    <scope>NUCLEOTIDE SEQUENCE [LARGE SCALE GENOMIC DNA]</scope>
    <source>
        <strain>DP4</strain>
    </source>
</reference>
<feature type="chain" id="PRO_0000296927" description="Putative manganese efflux pump MntP">
    <location>
        <begin position="1"/>
        <end position="201"/>
    </location>
</feature>
<feature type="transmembrane region" description="Helical" evidence="1">
    <location>
        <begin position="6"/>
        <end position="26"/>
    </location>
</feature>
<feature type="transmembrane region" description="Helical" evidence="1">
    <location>
        <begin position="39"/>
        <end position="59"/>
    </location>
</feature>
<feature type="transmembrane region" description="Helical" evidence="1">
    <location>
        <begin position="105"/>
        <end position="125"/>
    </location>
</feature>
<feature type="transmembrane region" description="Helical" evidence="1">
    <location>
        <begin position="127"/>
        <end position="147"/>
    </location>
</feature>
<feature type="transmembrane region" description="Helical" evidence="1">
    <location>
        <begin position="169"/>
        <end position="189"/>
    </location>
</feature>
<gene>
    <name evidence="1" type="primary">mntP</name>
    <name type="ordered locus">Dvul_0455</name>
</gene>
<comment type="function">
    <text evidence="1">Probably functions as a manganese efflux pump.</text>
</comment>
<comment type="subcellular location">
    <subcellularLocation>
        <location evidence="1">Cell inner membrane</location>
        <topology evidence="1">Multi-pass membrane protein</topology>
    </subcellularLocation>
</comment>
<comment type="similarity">
    <text evidence="1">Belongs to the MntP (TC 9.B.29) family.</text>
</comment>
<evidence type="ECO:0000255" key="1">
    <source>
        <dbReference type="HAMAP-Rule" id="MF_01521"/>
    </source>
</evidence>
<protein>
    <recommendedName>
        <fullName evidence="1">Putative manganese efflux pump MntP</fullName>
    </recommendedName>
</protein>
<organism>
    <name type="scientific">Nitratidesulfovibrio vulgaris (strain DP4)</name>
    <name type="common">Desulfovibrio vulgaris</name>
    <dbReference type="NCBI Taxonomy" id="391774"/>
    <lineage>
        <taxon>Bacteria</taxon>
        <taxon>Pseudomonadati</taxon>
        <taxon>Thermodesulfobacteriota</taxon>
        <taxon>Desulfovibrionia</taxon>
        <taxon>Desulfovibrionales</taxon>
        <taxon>Desulfovibrionaceae</taxon>
        <taxon>Nitratidesulfovibrio</taxon>
    </lineage>
</organism>